<sequence length="350" mass="38387">MVNVSITTDYSRMLFMRNTTSTLKIAIIGYGSQGRAHALNLRDSGFDIIIGLRPGGPTEAKAQADGFTVQSPDQAAKHADLVAVLTPDMVQKKLYEEVLAPNIKQGACLLFAHGLNVHYGMITPRSDLDVVLVAPKGPGALVRREYEIGRGVPCIYAVHQDLSSHAEQLALTYAGGLGGARANIIKTTFKEETETDLFGEQAVLCGGVSSLVQAGFETLVEAGYQPEIAYYEVLHELKLIVDLFYEGGITRMLEFVSETAQYGDYVSGPRVIDGSTKERMKAVLKDIQDGTFTKHWIAEYQAGLPNYKKYKQADLEHPIEKVGKQLRAKMVWLNSEKTNDTTPPMSSKVV</sequence>
<reference key="1">
    <citation type="journal article" date="2000" name="Nature">
        <title>The genome sequence of the plant pathogen Xylella fastidiosa.</title>
        <authorList>
            <person name="Simpson A.J.G."/>
            <person name="Reinach F.C."/>
            <person name="Arruda P."/>
            <person name="Abreu F.A."/>
            <person name="Acencio M."/>
            <person name="Alvarenga R."/>
            <person name="Alves L.M.C."/>
            <person name="Araya J.E."/>
            <person name="Baia G.S."/>
            <person name="Baptista C.S."/>
            <person name="Barros M.H."/>
            <person name="Bonaccorsi E.D."/>
            <person name="Bordin S."/>
            <person name="Bove J.M."/>
            <person name="Briones M.R.S."/>
            <person name="Bueno M.R.P."/>
            <person name="Camargo A.A."/>
            <person name="Camargo L.E.A."/>
            <person name="Carraro D.M."/>
            <person name="Carrer H."/>
            <person name="Colauto N.B."/>
            <person name="Colombo C."/>
            <person name="Costa F.F."/>
            <person name="Costa M.C.R."/>
            <person name="Costa-Neto C.M."/>
            <person name="Coutinho L.L."/>
            <person name="Cristofani M."/>
            <person name="Dias-Neto E."/>
            <person name="Docena C."/>
            <person name="El-Dorry H."/>
            <person name="Facincani A.P."/>
            <person name="Ferreira A.J.S."/>
            <person name="Ferreira V.C.A."/>
            <person name="Ferro J.A."/>
            <person name="Fraga J.S."/>
            <person name="Franca S.C."/>
            <person name="Franco M.C."/>
            <person name="Frohme M."/>
            <person name="Furlan L.R."/>
            <person name="Garnier M."/>
            <person name="Goldman G.H."/>
            <person name="Goldman M.H.S."/>
            <person name="Gomes S.L."/>
            <person name="Gruber A."/>
            <person name="Ho P.L."/>
            <person name="Hoheisel J.D."/>
            <person name="Junqueira M.L."/>
            <person name="Kemper E.L."/>
            <person name="Kitajima J.P."/>
            <person name="Krieger J.E."/>
            <person name="Kuramae E.E."/>
            <person name="Laigret F."/>
            <person name="Lambais M.R."/>
            <person name="Leite L.C.C."/>
            <person name="Lemos E.G.M."/>
            <person name="Lemos M.V.F."/>
            <person name="Lopes S.A."/>
            <person name="Lopes C.R."/>
            <person name="Machado J.A."/>
            <person name="Machado M.A."/>
            <person name="Madeira A.M.B.N."/>
            <person name="Madeira H.M.F."/>
            <person name="Marino C.L."/>
            <person name="Marques M.V."/>
            <person name="Martins E.A.L."/>
            <person name="Martins E.M.F."/>
            <person name="Matsukuma A.Y."/>
            <person name="Menck C.F.M."/>
            <person name="Miracca E.C."/>
            <person name="Miyaki C.Y."/>
            <person name="Monteiro-Vitorello C.B."/>
            <person name="Moon D.H."/>
            <person name="Nagai M.A."/>
            <person name="Nascimento A.L.T.O."/>
            <person name="Netto L.E.S."/>
            <person name="Nhani A. Jr."/>
            <person name="Nobrega F.G."/>
            <person name="Nunes L.R."/>
            <person name="Oliveira M.A."/>
            <person name="de Oliveira M.C."/>
            <person name="de Oliveira R.C."/>
            <person name="Palmieri D.A."/>
            <person name="Paris A."/>
            <person name="Peixoto B.R."/>
            <person name="Pereira G.A.G."/>
            <person name="Pereira H.A. Jr."/>
            <person name="Pesquero J.B."/>
            <person name="Quaggio R.B."/>
            <person name="Roberto P.G."/>
            <person name="Rodrigues V."/>
            <person name="de Rosa A.J.M."/>
            <person name="de Rosa V.E. Jr."/>
            <person name="de Sa R.G."/>
            <person name="Santelli R.V."/>
            <person name="Sawasaki H.E."/>
            <person name="da Silva A.C.R."/>
            <person name="da Silva A.M."/>
            <person name="da Silva F.R."/>
            <person name="Silva W.A. Jr."/>
            <person name="da Silveira J.F."/>
            <person name="Silvestri M.L.Z."/>
            <person name="Siqueira W.J."/>
            <person name="de Souza A.A."/>
            <person name="de Souza A.P."/>
            <person name="Terenzi M.F."/>
            <person name="Truffi D."/>
            <person name="Tsai S.M."/>
            <person name="Tsuhako M.H."/>
            <person name="Vallada H."/>
            <person name="Van Sluys M.A."/>
            <person name="Verjovski-Almeida S."/>
            <person name="Vettore A.L."/>
            <person name="Zago M.A."/>
            <person name="Zatz M."/>
            <person name="Meidanis J."/>
            <person name="Setubal J.C."/>
        </authorList>
    </citation>
    <scope>NUCLEOTIDE SEQUENCE [LARGE SCALE GENOMIC DNA]</scope>
    <source>
        <strain>9a5c</strain>
    </source>
</reference>
<comment type="function">
    <text evidence="1">Involved in the biosynthesis of branched-chain amino acids (BCAA). Catalyzes an alkyl-migration followed by a ketol-acid reduction of (S)-2-acetolactate (S2AL) to yield (R)-2,3-dihydroxy-isovalerate. In the isomerase reaction, S2AL is rearranged via a Mg-dependent methyl migration to produce 3-hydroxy-3-methyl-2-ketobutyrate (HMKB). In the reductase reaction, this 2-ketoacid undergoes a metal-dependent reduction by NADPH to yield (R)-2,3-dihydroxy-isovalerate.</text>
</comment>
<comment type="catalytic activity">
    <reaction evidence="1">
        <text>(2R)-2,3-dihydroxy-3-methylbutanoate + NADP(+) = (2S)-2-acetolactate + NADPH + H(+)</text>
        <dbReference type="Rhea" id="RHEA:22068"/>
        <dbReference type="ChEBI" id="CHEBI:15378"/>
        <dbReference type="ChEBI" id="CHEBI:49072"/>
        <dbReference type="ChEBI" id="CHEBI:57783"/>
        <dbReference type="ChEBI" id="CHEBI:58349"/>
        <dbReference type="ChEBI" id="CHEBI:58476"/>
        <dbReference type="EC" id="1.1.1.86"/>
    </reaction>
</comment>
<comment type="catalytic activity">
    <reaction evidence="1">
        <text>(2R,3R)-2,3-dihydroxy-3-methylpentanoate + NADP(+) = (S)-2-ethyl-2-hydroxy-3-oxobutanoate + NADPH + H(+)</text>
        <dbReference type="Rhea" id="RHEA:13493"/>
        <dbReference type="ChEBI" id="CHEBI:15378"/>
        <dbReference type="ChEBI" id="CHEBI:49256"/>
        <dbReference type="ChEBI" id="CHEBI:49258"/>
        <dbReference type="ChEBI" id="CHEBI:57783"/>
        <dbReference type="ChEBI" id="CHEBI:58349"/>
        <dbReference type="EC" id="1.1.1.86"/>
    </reaction>
</comment>
<comment type="cofactor">
    <cofactor evidence="1">
        <name>Mg(2+)</name>
        <dbReference type="ChEBI" id="CHEBI:18420"/>
    </cofactor>
    <text evidence="1">Binds 2 magnesium ions per subunit.</text>
</comment>
<comment type="pathway">
    <text evidence="1">Amino-acid biosynthesis; L-isoleucine biosynthesis; L-isoleucine from 2-oxobutanoate: step 2/4.</text>
</comment>
<comment type="pathway">
    <text evidence="1">Amino-acid biosynthesis; L-valine biosynthesis; L-valine from pyruvate: step 2/4.</text>
</comment>
<comment type="similarity">
    <text evidence="1">Belongs to the ketol-acid reductoisomerase family.</text>
</comment>
<comment type="sequence caution" evidence="4">
    <conflict type="erroneous initiation">
        <sequence resource="EMBL-CDS" id="AAF84628"/>
    </conflict>
</comment>
<accession>Q9PCF9</accession>
<dbReference type="EC" id="1.1.1.86" evidence="1"/>
<dbReference type="EMBL" id="AE003849">
    <property type="protein sequence ID" value="AAF84628.1"/>
    <property type="status" value="ALT_INIT"/>
    <property type="molecule type" value="Genomic_DNA"/>
</dbReference>
<dbReference type="PIR" id="E82634">
    <property type="entry name" value="E82634"/>
</dbReference>
<dbReference type="SMR" id="Q9PCF9"/>
<dbReference type="STRING" id="160492.XF_1822"/>
<dbReference type="KEGG" id="xfa:XF_1822"/>
<dbReference type="eggNOG" id="COG0059">
    <property type="taxonomic scope" value="Bacteria"/>
</dbReference>
<dbReference type="HOGENOM" id="CLU_033821_0_1_6"/>
<dbReference type="UniPathway" id="UPA00047">
    <property type="reaction ID" value="UER00056"/>
</dbReference>
<dbReference type="UniPathway" id="UPA00049">
    <property type="reaction ID" value="UER00060"/>
</dbReference>
<dbReference type="Proteomes" id="UP000000812">
    <property type="component" value="Chromosome"/>
</dbReference>
<dbReference type="GO" id="GO:0005829">
    <property type="term" value="C:cytosol"/>
    <property type="evidence" value="ECO:0007669"/>
    <property type="project" value="TreeGrafter"/>
</dbReference>
<dbReference type="GO" id="GO:0004455">
    <property type="term" value="F:ketol-acid reductoisomerase activity"/>
    <property type="evidence" value="ECO:0007669"/>
    <property type="project" value="UniProtKB-UniRule"/>
</dbReference>
<dbReference type="GO" id="GO:0000287">
    <property type="term" value="F:magnesium ion binding"/>
    <property type="evidence" value="ECO:0007669"/>
    <property type="project" value="UniProtKB-UniRule"/>
</dbReference>
<dbReference type="GO" id="GO:0050661">
    <property type="term" value="F:NADP binding"/>
    <property type="evidence" value="ECO:0007669"/>
    <property type="project" value="InterPro"/>
</dbReference>
<dbReference type="GO" id="GO:0009097">
    <property type="term" value="P:isoleucine biosynthetic process"/>
    <property type="evidence" value="ECO:0007669"/>
    <property type="project" value="UniProtKB-UniRule"/>
</dbReference>
<dbReference type="GO" id="GO:0009099">
    <property type="term" value="P:L-valine biosynthetic process"/>
    <property type="evidence" value="ECO:0007669"/>
    <property type="project" value="UniProtKB-UniRule"/>
</dbReference>
<dbReference type="FunFam" id="3.40.50.720:FF:000023">
    <property type="entry name" value="Ketol-acid reductoisomerase (NADP(+))"/>
    <property type="match status" value="1"/>
</dbReference>
<dbReference type="Gene3D" id="6.10.240.10">
    <property type="match status" value="1"/>
</dbReference>
<dbReference type="Gene3D" id="3.40.50.720">
    <property type="entry name" value="NAD(P)-binding Rossmann-like Domain"/>
    <property type="match status" value="1"/>
</dbReference>
<dbReference type="HAMAP" id="MF_00435">
    <property type="entry name" value="IlvC"/>
    <property type="match status" value="1"/>
</dbReference>
<dbReference type="InterPro" id="IPR008927">
    <property type="entry name" value="6-PGluconate_DH-like_C_sf"/>
</dbReference>
<dbReference type="InterPro" id="IPR013023">
    <property type="entry name" value="KARI"/>
</dbReference>
<dbReference type="InterPro" id="IPR000506">
    <property type="entry name" value="KARI_C"/>
</dbReference>
<dbReference type="InterPro" id="IPR013116">
    <property type="entry name" value="KARI_N"/>
</dbReference>
<dbReference type="InterPro" id="IPR014359">
    <property type="entry name" value="KARI_prok"/>
</dbReference>
<dbReference type="InterPro" id="IPR036291">
    <property type="entry name" value="NAD(P)-bd_dom_sf"/>
</dbReference>
<dbReference type="NCBIfam" id="TIGR00465">
    <property type="entry name" value="ilvC"/>
    <property type="match status" value="1"/>
</dbReference>
<dbReference type="NCBIfam" id="NF004017">
    <property type="entry name" value="PRK05479.1"/>
    <property type="match status" value="1"/>
</dbReference>
<dbReference type="PANTHER" id="PTHR21371">
    <property type="entry name" value="KETOL-ACID REDUCTOISOMERASE, MITOCHONDRIAL"/>
    <property type="match status" value="1"/>
</dbReference>
<dbReference type="PANTHER" id="PTHR21371:SF1">
    <property type="entry name" value="KETOL-ACID REDUCTOISOMERASE, MITOCHONDRIAL"/>
    <property type="match status" value="1"/>
</dbReference>
<dbReference type="Pfam" id="PF01450">
    <property type="entry name" value="KARI_C"/>
    <property type="match status" value="1"/>
</dbReference>
<dbReference type="Pfam" id="PF07991">
    <property type="entry name" value="KARI_N"/>
    <property type="match status" value="1"/>
</dbReference>
<dbReference type="PIRSF" id="PIRSF000116">
    <property type="entry name" value="IlvC_gammaproteo"/>
    <property type="match status" value="1"/>
</dbReference>
<dbReference type="SUPFAM" id="SSF48179">
    <property type="entry name" value="6-phosphogluconate dehydrogenase C-terminal domain-like"/>
    <property type="match status" value="1"/>
</dbReference>
<dbReference type="SUPFAM" id="SSF51735">
    <property type="entry name" value="NAD(P)-binding Rossmann-fold domains"/>
    <property type="match status" value="1"/>
</dbReference>
<dbReference type="PROSITE" id="PS51851">
    <property type="entry name" value="KARI_C"/>
    <property type="match status" value="1"/>
</dbReference>
<dbReference type="PROSITE" id="PS51850">
    <property type="entry name" value="KARI_N"/>
    <property type="match status" value="1"/>
</dbReference>
<protein>
    <recommendedName>
        <fullName evidence="1">Ketol-acid reductoisomerase (NADP(+))</fullName>
        <shortName evidence="1">KARI</shortName>
        <ecNumber evidence="1">1.1.1.86</ecNumber>
    </recommendedName>
    <alternativeName>
        <fullName evidence="1">Acetohydroxy-acid isomeroreductase</fullName>
        <shortName evidence="1">AHIR</shortName>
    </alternativeName>
    <alternativeName>
        <fullName evidence="1">Alpha-keto-beta-hydroxylacyl reductoisomerase</fullName>
    </alternativeName>
    <alternativeName>
        <fullName evidence="1">Ketol-acid reductoisomerase type 1</fullName>
    </alternativeName>
    <alternativeName>
        <fullName evidence="1">Ketol-acid reductoisomerase type I</fullName>
    </alternativeName>
</protein>
<proteinExistence type="inferred from homology"/>
<organism>
    <name type="scientific">Xylella fastidiosa (strain 9a5c)</name>
    <dbReference type="NCBI Taxonomy" id="160492"/>
    <lineage>
        <taxon>Bacteria</taxon>
        <taxon>Pseudomonadati</taxon>
        <taxon>Pseudomonadota</taxon>
        <taxon>Gammaproteobacteria</taxon>
        <taxon>Lysobacterales</taxon>
        <taxon>Lysobacteraceae</taxon>
        <taxon>Xylella</taxon>
    </lineage>
</organism>
<evidence type="ECO:0000255" key="1">
    <source>
        <dbReference type="HAMAP-Rule" id="MF_00435"/>
    </source>
</evidence>
<evidence type="ECO:0000255" key="2">
    <source>
        <dbReference type="PROSITE-ProRule" id="PRU01197"/>
    </source>
</evidence>
<evidence type="ECO:0000255" key="3">
    <source>
        <dbReference type="PROSITE-ProRule" id="PRU01198"/>
    </source>
</evidence>
<evidence type="ECO:0000305" key="4"/>
<keyword id="KW-0028">Amino-acid biosynthesis</keyword>
<keyword id="KW-0100">Branched-chain amino acid biosynthesis</keyword>
<keyword id="KW-0460">Magnesium</keyword>
<keyword id="KW-0479">Metal-binding</keyword>
<keyword id="KW-0521">NADP</keyword>
<keyword id="KW-0560">Oxidoreductase</keyword>
<feature type="chain" id="PRO_0000151385" description="Ketol-acid reductoisomerase (NADP(+))">
    <location>
        <begin position="1"/>
        <end position="350"/>
    </location>
</feature>
<feature type="domain" description="KARI N-terminal Rossmann" evidence="2">
    <location>
        <begin position="4"/>
        <end position="187"/>
    </location>
</feature>
<feature type="domain" description="KARI C-terminal knotted" evidence="3">
    <location>
        <begin position="188"/>
        <end position="333"/>
    </location>
</feature>
<feature type="active site" evidence="1">
    <location>
        <position position="113"/>
    </location>
</feature>
<feature type="binding site" evidence="1">
    <location>
        <begin position="30"/>
        <end position="33"/>
    </location>
    <ligand>
        <name>NADP(+)</name>
        <dbReference type="ChEBI" id="CHEBI:58349"/>
    </ligand>
</feature>
<feature type="binding site" evidence="1">
    <location>
        <position position="53"/>
    </location>
    <ligand>
        <name>NADP(+)</name>
        <dbReference type="ChEBI" id="CHEBI:58349"/>
    </ligand>
</feature>
<feature type="binding site" evidence="1">
    <location>
        <position position="58"/>
    </location>
    <ligand>
        <name>NADP(+)</name>
        <dbReference type="ChEBI" id="CHEBI:58349"/>
    </ligand>
</feature>
<feature type="binding site" evidence="1">
    <location>
        <begin position="88"/>
        <end position="91"/>
    </location>
    <ligand>
        <name>NADP(+)</name>
        <dbReference type="ChEBI" id="CHEBI:58349"/>
    </ligand>
</feature>
<feature type="binding site" evidence="1">
    <location>
        <position position="139"/>
    </location>
    <ligand>
        <name>NADP(+)</name>
        <dbReference type="ChEBI" id="CHEBI:58349"/>
    </ligand>
</feature>
<feature type="binding site" evidence="1">
    <location>
        <position position="196"/>
    </location>
    <ligand>
        <name>Mg(2+)</name>
        <dbReference type="ChEBI" id="CHEBI:18420"/>
        <label>1</label>
    </ligand>
</feature>
<feature type="binding site" evidence="1">
    <location>
        <position position="196"/>
    </location>
    <ligand>
        <name>Mg(2+)</name>
        <dbReference type="ChEBI" id="CHEBI:18420"/>
        <label>2</label>
    </ligand>
</feature>
<feature type="binding site" evidence="1">
    <location>
        <position position="200"/>
    </location>
    <ligand>
        <name>Mg(2+)</name>
        <dbReference type="ChEBI" id="CHEBI:18420"/>
        <label>1</label>
    </ligand>
</feature>
<feature type="binding site" evidence="1">
    <location>
        <position position="232"/>
    </location>
    <ligand>
        <name>Mg(2+)</name>
        <dbReference type="ChEBI" id="CHEBI:18420"/>
        <label>2</label>
    </ligand>
</feature>
<feature type="binding site" evidence="1">
    <location>
        <position position="236"/>
    </location>
    <ligand>
        <name>Mg(2+)</name>
        <dbReference type="ChEBI" id="CHEBI:18420"/>
        <label>2</label>
    </ligand>
</feature>
<feature type="binding site" evidence="1">
    <location>
        <position position="257"/>
    </location>
    <ligand>
        <name>substrate</name>
    </ligand>
</feature>
<gene>
    <name evidence="1" type="primary">ilvC</name>
    <name type="ordered locus">XF_1822</name>
</gene>
<name>ILVC_XYLFA</name>